<gene>
    <name evidence="1" type="primary">accA</name>
    <name type="ordered locus">aq_1206</name>
</gene>
<keyword id="KW-0067">ATP-binding</keyword>
<keyword id="KW-0963">Cytoplasm</keyword>
<keyword id="KW-0275">Fatty acid biosynthesis</keyword>
<keyword id="KW-0276">Fatty acid metabolism</keyword>
<keyword id="KW-0444">Lipid biosynthesis</keyword>
<keyword id="KW-0443">Lipid metabolism</keyword>
<keyword id="KW-0547">Nucleotide-binding</keyword>
<keyword id="KW-1185">Reference proteome</keyword>
<keyword id="KW-0808">Transferase</keyword>
<feature type="chain" id="PRO_0000146772" description="Acetyl-coenzyme A carboxylase carboxyl transferase subunit alpha">
    <location>
        <begin position="1"/>
        <end position="323"/>
    </location>
</feature>
<feature type="domain" description="CoA carboxyltransferase C-terminal" evidence="2">
    <location>
        <begin position="35"/>
        <end position="296"/>
    </location>
</feature>
<dbReference type="EC" id="2.1.3.15" evidence="1"/>
<dbReference type="EMBL" id="AE000657">
    <property type="protein sequence ID" value="AAC07216.1"/>
    <property type="molecule type" value="Genomic_DNA"/>
</dbReference>
<dbReference type="PIR" id="A70404">
    <property type="entry name" value="A70404"/>
</dbReference>
<dbReference type="RefSeq" id="NP_213824.1">
    <property type="nucleotide sequence ID" value="NC_000918.1"/>
</dbReference>
<dbReference type="RefSeq" id="WP_010880762.1">
    <property type="nucleotide sequence ID" value="NC_000918.1"/>
</dbReference>
<dbReference type="SMR" id="O67260"/>
<dbReference type="FunCoup" id="O67260">
    <property type="interactions" value="393"/>
</dbReference>
<dbReference type="STRING" id="224324.aq_1206"/>
<dbReference type="DNASU" id="1192606"/>
<dbReference type="EnsemblBacteria" id="AAC07216">
    <property type="protein sequence ID" value="AAC07216"/>
    <property type="gene ID" value="aq_1206"/>
</dbReference>
<dbReference type="KEGG" id="aae:aq_1206"/>
<dbReference type="PATRIC" id="fig|224324.8.peg.938"/>
<dbReference type="eggNOG" id="COG0825">
    <property type="taxonomic scope" value="Bacteria"/>
</dbReference>
<dbReference type="HOGENOM" id="CLU_015486_0_2_0"/>
<dbReference type="InParanoid" id="O67260"/>
<dbReference type="OrthoDB" id="9808023at2"/>
<dbReference type="UniPathway" id="UPA00655">
    <property type="reaction ID" value="UER00711"/>
</dbReference>
<dbReference type="Proteomes" id="UP000000798">
    <property type="component" value="Chromosome"/>
</dbReference>
<dbReference type="GO" id="GO:0009317">
    <property type="term" value="C:acetyl-CoA carboxylase complex"/>
    <property type="evidence" value="ECO:0007669"/>
    <property type="project" value="InterPro"/>
</dbReference>
<dbReference type="GO" id="GO:0003989">
    <property type="term" value="F:acetyl-CoA carboxylase activity"/>
    <property type="evidence" value="ECO:0007669"/>
    <property type="project" value="InterPro"/>
</dbReference>
<dbReference type="GO" id="GO:0005524">
    <property type="term" value="F:ATP binding"/>
    <property type="evidence" value="ECO:0007669"/>
    <property type="project" value="UniProtKB-KW"/>
</dbReference>
<dbReference type="GO" id="GO:0016743">
    <property type="term" value="F:carboxyl- or carbamoyltransferase activity"/>
    <property type="evidence" value="ECO:0007669"/>
    <property type="project" value="UniProtKB-UniRule"/>
</dbReference>
<dbReference type="GO" id="GO:0006633">
    <property type="term" value="P:fatty acid biosynthetic process"/>
    <property type="evidence" value="ECO:0007669"/>
    <property type="project" value="UniProtKB-KW"/>
</dbReference>
<dbReference type="GO" id="GO:2001295">
    <property type="term" value="P:malonyl-CoA biosynthetic process"/>
    <property type="evidence" value="ECO:0007669"/>
    <property type="project" value="UniProtKB-UniRule"/>
</dbReference>
<dbReference type="Gene3D" id="3.90.226.10">
    <property type="entry name" value="2-enoyl-CoA Hydratase, Chain A, domain 1"/>
    <property type="match status" value="1"/>
</dbReference>
<dbReference type="HAMAP" id="MF_00823">
    <property type="entry name" value="AcetylCoA_CT_alpha"/>
    <property type="match status" value="1"/>
</dbReference>
<dbReference type="InterPro" id="IPR001095">
    <property type="entry name" value="Acetyl_CoA_COase_a_su"/>
</dbReference>
<dbReference type="InterPro" id="IPR029045">
    <property type="entry name" value="ClpP/crotonase-like_dom_sf"/>
</dbReference>
<dbReference type="InterPro" id="IPR011763">
    <property type="entry name" value="COA_CT_C"/>
</dbReference>
<dbReference type="NCBIfam" id="TIGR00513">
    <property type="entry name" value="accA"/>
    <property type="match status" value="1"/>
</dbReference>
<dbReference type="NCBIfam" id="NF041504">
    <property type="entry name" value="AccA_sub"/>
    <property type="match status" value="1"/>
</dbReference>
<dbReference type="NCBIfam" id="NF004344">
    <property type="entry name" value="PRK05724.1"/>
    <property type="match status" value="1"/>
</dbReference>
<dbReference type="PANTHER" id="PTHR42853">
    <property type="entry name" value="ACETYL-COENZYME A CARBOXYLASE CARBOXYL TRANSFERASE SUBUNIT ALPHA"/>
    <property type="match status" value="1"/>
</dbReference>
<dbReference type="PANTHER" id="PTHR42853:SF3">
    <property type="entry name" value="ACETYL-COENZYME A CARBOXYLASE CARBOXYL TRANSFERASE SUBUNIT ALPHA, CHLOROPLASTIC"/>
    <property type="match status" value="1"/>
</dbReference>
<dbReference type="Pfam" id="PF03255">
    <property type="entry name" value="ACCA"/>
    <property type="match status" value="1"/>
</dbReference>
<dbReference type="PRINTS" id="PR01069">
    <property type="entry name" value="ACCCTRFRASEA"/>
</dbReference>
<dbReference type="SUPFAM" id="SSF52096">
    <property type="entry name" value="ClpP/crotonase"/>
    <property type="match status" value="1"/>
</dbReference>
<dbReference type="PROSITE" id="PS50989">
    <property type="entry name" value="COA_CT_CTER"/>
    <property type="match status" value="1"/>
</dbReference>
<organism>
    <name type="scientific">Aquifex aeolicus (strain VF5)</name>
    <dbReference type="NCBI Taxonomy" id="224324"/>
    <lineage>
        <taxon>Bacteria</taxon>
        <taxon>Pseudomonadati</taxon>
        <taxon>Aquificota</taxon>
        <taxon>Aquificia</taxon>
        <taxon>Aquificales</taxon>
        <taxon>Aquificaceae</taxon>
        <taxon>Aquifex</taxon>
    </lineage>
</organism>
<protein>
    <recommendedName>
        <fullName evidence="1">Acetyl-coenzyme A carboxylase carboxyl transferase subunit alpha</fullName>
        <shortName evidence="1">ACCase subunit alpha</shortName>
        <shortName evidence="1">Acetyl-CoA carboxylase carboxyltransferase subunit alpha</shortName>
        <ecNumber evidence="1">2.1.3.15</ecNumber>
    </recommendedName>
</protein>
<name>ACCA_AQUAE</name>
<accession>O67260</accession>
<comment type="function">
    <text evidence="1">Component of the acetyl coenzyme A carboxylase (ACC) complex. First, biotin carboxylase catalyzes the carboxylation of biotin on its carrier protein (BCCP) and then the CO(2) group is transferred by the carboxyltransferase to acetyl-CoA to form malonyl-CoA.</text>
</comment>
<comment type="catalytic activity">
    <reaction evidence="1">
        <text>N(6)-carboxybiotinyl-L-lysyl-[protein] + acetyl-CoA = N(6)-biotinyl-L-lysyl-[protein] + malonyl-CoA</text>
        <dbReference type="Rhea" id="RHEA:54728"/>
        <dbReference type="Rhea" id="RHEA-COMP:10505"/>
        <dbReference type="Rhea" id="RHEA-COMP:10506"/>
        <dbReference type="ChEBI" id="CHEBI:57288"/>
        <dbReference type="ChEBI" id="CHEBI:57384"/>
        <dbReference type="ChEBI" id="CHEBI:83144"/>
        <dbReference type="ChEBI" id="CHEBI:83145"/>
        <dbReference type="EC" id="2.1.3.15"/>
    </reaction>
</comment>
<comment type="pathway">
    <text evidence="1">Lipid metabolism; malonyl-CoA biosynthesis; malonyl-CoA from acetyl-CoA: step 1/1.</text>
</comment>
<comment type="subunit">
    <text evidence="1">Acetyl-CoA carboxylase is a heterohexamer composed of biotin carboxyl carrier protein (AccB), biotin carboxylase (AccC) and two subunits each of ACCase subunit alpha (AccA) and ACCase subunit beta (AccD).</text>
</comment>
<comment type="subcellular location">
    <subcellularLocation>
        <location evidence="1">Cytoplasm</location>
    </subcellularLocation>
</comment>
<comment type="similarity">
    <text evidence="1">Belongs to the AccA family.</text>
</comment>
<sequence length="323" mass="36198">MILFKVMHLEFEKELLEIKEKIDRLLGLYRLGKEEVLSELDELRKKFKEKARKIYRDLSPWERVQVARHPKRPHTSDYIKYLIKDFEEVHGDTCYGDDKAVIAGFGYFRGKPVAVVGHEKGKDTKEKLERNFGMPHPEGYRKAIKVFKLAERYNIPVITFIDTPGAFPGIGAEERGQSRAIAESMLTMAFLKVPSVAVVIGEGGSGGALAFGVANRVCILENAYYSVISPEGCAAILWKDQSKVKEAAKALRLTAKDLKELGVVDCVIPEPYGAAHWSPRGTAMMVGMTLKKCLDELSKLTEEGVVRSRLEKFKNMGAFKIAS</sequence>
<reference key="1">
    <citation type="journal article" date="1998" name="Nature">
        <title>The complete genome of the hyperthermophilic bacterium Aquifex aeolicus.</title>
        <authorList>
            <person name="Deckert G."/>
            <person name="Warren P.V."/>
            <person name="Gaasterland T."/>
            <person name="Young W.G."/>
            <person name="Lenox A.L."/>
            <person name="Graham D.E."/>
            <person name="Overbeek R."/>
            <person name="Snead M.A."/>
            <person name="Keller M."/>
            <person name="Aujay M."/>
            <person name="Huber R."/>
            <person name="Feldman R.A."/>
            <person name="Short J.M."/>
            <person name="Olsen G.J."/>
            <person name="Swanson R.V."/>
        </authorList>
    </citation>
    <scope>NUCLEOTIDE SEQUENCE [LARGE SCALE GENOMIC DNA]</scope>
    <source>
        <strain>VF5</strain>
    </source>
</reference>
<proteinExistence type="inferred from homology"/>
<evidence type="ECO:0000255" key="1">
    <source>
        <dbReference type="HAMAP-Rule" id="MF_00823"/>
    </source>
</evidence>
<evidence type="ECO:0000255" key="2">
    <source>
        <dbReference type="PROSITE-ProRule" id="PRU01137"/>
    </source>
</evidence>